<dbReference type="PIR" id="D90809">
    <property type="entry name" value="HVMS61"/>
</dbReference>
<dbReference type="SMR" id="P01753"/>
<dbReference type="FunCoup" id="P01753">
    <property type="interactions" value="582"/>
</dbReference>
<dbReference type="jPOST" id="P01753"/>
<dbReference type="PeptideAtlas" id="P01753"/>
<dbReference type="InParanoid" id="P01753"/>
<dbReference type="Proteomes" id="UP000000589">
    <property type="component" value="Unplaced"/>
</dbReference>
<dbReference type="RNAct" id="P01753">
    <property type="molecule type" value="protein"/>
</dbReference>
<dbReference type="GO" id="GO:0005576">
    <property type="term" value="C:extracellular region"/>
    <property type="evidence" value="ECO:0007669"/>
    <property type="project" value="UniProtKB-ARBA"/>
</dbReference>
<dbReference type="GO" id="GO:0019814">
    <property type="term" value="C:immunoglobulin complex"/>
    <property type="evidence" value="ECO:0007669"/>
    <property type="project" value="UniProtKB-KW"/>
</dbReference>
<dbReference type="GO" id="GO:0003823">
    <property type="term" value="F:antigen binding"/>
    <property type="evidence" value="ECO:0000318"/>
    <property type="project" value="GO_Central"/>
</dbReference>
<dbReference type="GO" id="GO:0016064">
    <property type="term" value="P:immunoglobulin mediated immune response"/>
    <property type="evidence" value="ECO:0000318"/>
    <property type="project" value="GO_Central"/>
</dbReference>
<dbReference type="CDD" id="cd04981">
    <property type="entry name" value="IgV_H"/>
    <property type="match status" value="1"/>
</dbReference>
<dbReference type="FunFam" id="2.60.40.10:FF:001025">
    <property type="entry name" value="Immunoglobulin heavy variable V1-74"/>
    <property type="match status" value="1"/>
</dbReference>
<dbReference type="Gene3D" id="2.60.40.10">
    <property type="entry name" value="Immunoglobulins"/>
    <property type="match status" value="1"/>
</dbReference>
<dbReference type="InterPro" id="IPR007110">
    <property type="entry name" value="Ig-like_dom"/>
</dbReference>
<dbReference type="InterPro" id="IPR036179">
    <property type="entry name" value="Ig-like_dom_sf"/>
</dbReference>
<dbReference type="InterPro" id="IPR013783">
    <property type="entry name" value="Ig-like_fold"/>
</dbReference>
<dbReference type="InterPro" id="IPR013106">
    <property type="entry name" value="Ig_V-set"/>
</dbReference>
<dbReference type="InterPro" id="IPR050199">
    <property type="entry name" value="IgHV"/>
</dbReference>
<dbReference type="PANTHER" id="PTHR23266">
    <property type="entry name" value="IMMUNOGLOBULIN HEAVY CHAIN"/>
    <property type="match status" value="1"/>
</dbReference>
<dbReference type="Pfam" id="PF07686">
    <property type="entry name" value="V-set"/>
    <property type="match status" value="1"/>
</dbReference>
<dbReference type="SMART" id="SM00406">
    <property type="entry name" value="IGv"/>
    <property type="match status" value="1"/>
</dbReference>
<dbReference type="SUPFAM" id="SSF48726">
    <property type="entry name" value="Immunoglobulin"/>
    <property type="match status" value="1"/>
</dbReference>
<dbReference type="PROSITE" id="PS50835">
    <property type="entry name" value="IG_LIKE"/>
    <property type="match status" value="1"/>
</dbReference>
<proteinExistence type="predicted"/>
<comment type="miscellaneous">
    <text>This germline gene belongs to a set of closely related genes that could encode V regions of NPb antibodies.</text>
</comment>
<evidence type="ECO:0000255" key="1">
    <source>
        <dbReference type="PROSITE-ProRule" id="PRU00114"/>
    </source>
</evidence>
<sequence length="117" mass="12890">MGWSCIMLFLAATATGVHSQVQLQQPGAELVKPGASVKLSCKASGYTFTSYWMHWVKQRPGRGLEWIGRIDPNSGGTKYNEKFKSKATLTVDTSSSTAYMQLHSLTSEDSAVYYCAR</sequence>
<reference key="1">
    <citation type="journal article" date="1981" name="Cell">
        <title>Heavy chain variable region contribution to the NPb family of antibodies: somatic mutation evident in a gamma 2a variable region.</title>
        <authorList>
            <person name="Bothwell A.L.M."/>
            <person name="Paskind M."/>
            <person name="Reth M."/>
            <person name="Imanishi-Kari T."/>
            <person name="Rajewsky K."/>
            <person name="Baltimore D."/>
        </authorList>
    </citation>
    <scope>NUCLEOTIDE SEQUENCE</scope>
    <source>
        <strain>C57BL/6J</strain>
    </source>
</reference>
<organism>
    <name type="scientific">Mus musculus</name>
    <name type="common">Mouse</name>
    <dbReference type="NCBI Taxonomy" id="10090"/>
    <lineage>
        <taxon>Eukaryota</taxon>
        <taxon>Metazoa</taxon>
        <taxon>Chordata</taxon>
        <taxon>Craniata</taxon>
        <taxon>Vertebrata</taxon>
        <taxon>Euteleostomi</taxon>
        <taxon>Mammalia</taxon>
        <taxon>Eutheria</taxon>
        <taxon>Euarchontoglires</taxon>
        <taxon>Glires</taxon>
        <taxon>Rodentia</taxon>
        <taxon>Myomorpha</taxon>
        <taxon>Muroidea</taxon>
        <taxon>Muridae</taxon>
        <taxon>Murinae</taxon>
        <taxon>Mus</taxon>
        <taxon>Mus</taxon>
    </lineage>
</organism>
<feature type="signal peptide">
    <location>
        <begin position="1"/>
        <end position="19"/>
    </location>
</feature>
<feature type="chain" id="PRO_0000015221" description="Ig heavy chain V region 186-1">
    <location>
        <begin position="20"/>
        <end position="117"/>
    </location>
</feature>
<feature type="region of interest" description="Framework-1">
    <location>
        <begin position="20"/>
        <end position="49"/>
    </location>
</feature>
<feature type="region of interest" description="Complementarity-determining-1">
    <location>
        <begin position="50"/>
        <end position="54"/>
    </location>
</feature>
<feature type="region of interest" description="Framework-2">
    <location>
        <begin position="55"/>
        <end position="68"/>
    </location>
</feature>
<feature type="region of interest" description="Complementarity-determining-2">
    <location>
        <begin position="69"/>
        <end position="85"/>
    </location>
</feature>
<feature type="region of interest" description="Framework-3">
    <location>
        <begin position="86"/>
        <end position="117"/>
    </location>
</feature>
<feature type="disulfide bond" evidence="1">
    <location>
        <begin position="41"/>
        <end position="115"/>
    </location>
</feature>
<feature type="non-terminal residue">
    <location>
        <position position="117"/>
    </location>
</feature>
<accession>P01753</accession>
<accession>P11271</accession>
<keyword id="KW-1064">Adaptive immunity</keyword>
<keyword id="KW-1015">Disulfide bond</keyword>
<keyword id="KW-0391">Immunity</keyword>
<keyword id="KW-1280">Immunoglobulin</keyword>
<keyword id="KW-1185">Reference proteome</keyword>
<keyword id="KW-0732">Signal</keyword>
<protein>
    <recommendedName>
        <fullName>Ig heavy chain V region 186-1</fullName>
    </recommendedName>
</protein>
<name>HVM09_MOUSE</name>